<name>URE3_BURO0</name>
<sequence length="100" mass="11114">MKLTPREKDKLLIFTAALLAERRRARGLKLNYPEAIAFITAALMEAARDGKTVAEVMHYGTTLLTRDDVMDGVPEMIPDIQVEATFPDGTKLVTVHHPIP</sequence>
<proteinExistence type="inferred from homology"/>
<accession>B1JX31</accession>
<gene>
    <name evidence="1" type="primary">ureA</name>
    <name type="ordered locus">Bcenmc03_0872</name>
</gene>
<keyword id="KW-0963">Cytoplasm</keyword>
<keyword id="KW-0378">Hydrolase</keyword>
<organism>
    <name type="scientific">Burkholderia orbicola (strain MC0-3)</name>
    <dbReference type="NCBI Taxonomy" id="406425"/>
    <lineage>
        <taxon>Bacteria</taxon>
        <taxon>Pseudomonadati</taxon>
        <taxon>Pseudomonadota</taxon>
        <taxon>Betaproteobacteria</taxon>
        <taxon>Burkholderiales</taxon>
        <taxon>Burkholderiaceae</taxon>
        <taxon>Burkholderia</taxon>
        <taxon>Burkholderia cepacia complex</taxon>
        <taxon>Burkholderia orbicola</taxon>
    </lineage>
</organism>
<reference key="1">
    <citation type="submission" date="2008-02" db="EMBL/GenBank/DDBJ databases">
        <title>Complete sequence of chromosome 1 of Burkholderia cenocepacia MC0-3.</title>
        <authorList>
            <person name="Copeland A."/>
            <person name="Lucas S."/>
            <person name="Lapidus A."/>
            <person name="Barry K."/>
            <person name="Bruce D."/>
            <person name="Goodwin L."/>
            <person name="Glavina del Rio T."/>
            <person name="Dalin E."/>
            <person name="Tice H."/>
            <person name="Pitluck S."/>
            <person name="Chain P."/>
            <person name="Malfatti S."/>
            <person name="Shin M."/>
            <person name="Vergez L."/>
            <person name="Schmutz J."/>
            <person name="Larimer F."/>
            <person name="Land M."/>
            <person name="Hauser L."/>
            <person name="Kyrpides N."/>
            <person name="Mikhailova N."/>
            <person name="Tiedje J."/>
            <person name="Richardson P."/>
        </authorList>
    </citation>
    <scope>NUCLEOTIDE SEQUENCE [LARGE SCALE GENOMIC DNA]</scope>
    <source>
        <strain>MC0-3</strain>
    </source>
</reference>
<feature type="chain" id="PRO_1000199853" description="Urease subunit gamma">
    <location>
        <begin position="1"/>
        <end position="100"/>
    </location>
</feature>
<dbReference type="EC" id="3.5.1.5" evidence="1"/>
<dbReference type="EMBL" id="CP000958">
    <property type="protein sequence ID" value="ACA90050.1"/>
    <property type="molecule type" value="Genomic_DNA"/>
</dbReference>
<dbReference type="RefSeq" id="WP_006476699.1">
    <property type="nucleotide sequence ID" value="NC_010508.1"/>
</dbReference>
<dbReference type="SMR" id="B1JX31"/>
<dbReference type="GeneID" id="83047663"/>
<dbReference type="KEGG" id="bcm:Bcenmc03_0872"/>
<dbReference type="HOGENOM" id="CLU_145825_1_0_4"/>
<dbReference type="UniPathway" id="UPA00258">
    <property type="reaction ID" value="UER00370"/>
</dbReference>
<dbReference type="Proteomes" id="UP000002169">
    <property type="component" value="Chromosome 1"/>
</dbReference>
<dbReference type="GO" id="GO:0005737">
    <property type="term" value="C:cytoplasm"/>
    <property type="evidence" value="ECO:0007669"/>
    <property type="project" value="UniProtKB-SubCell"/>
</dbReference>
<dbReference type="GO" id="GO:0016151">
    <property type="term" value="F:nickel cation binding"/>
    <property type="evidence" value="ECO:0007669"/>
    <property type="project" value="InterPro"/>
</dbReference>
<dbReference type="GO" id="GO:0009039">
    <property type="term" value="F:urease activity"/>
    <property type="evidence" value="ECO:0007669"/>
    <property type="project" value="UniProtKB-UniRule"/>
</dbReference>
<dbReference type="GO" id="GO:0043419">
    <property type="term" value="P:urea catabolic process"/>
    <property type="evidence" value="ECO:0007669"/>
    <property type="project" value="UniProtKB-UniRule"/>
</dbReference>
<dbReference type="CDD" id="cd00390">
    <property type="entry name" value="Urease_gamma"/>
    <property type="match status" value="1"/>
</dbReference>
<dbReference type="Gene3D" id="3.30.280.10">
    <property type="entry name" value="Urease, gamma-like subunit"/>
    <property type="match status" value="1"/>
</dbReference>
<dbReference type="HAMAP" id="MF_00739">
    <property type="entry name" value="Urease_gamma"/>
    <property type="match status" value="1"/>
</dbReference>
<dbReference type="InterPro" id="IPR012010">
    <property type="entry name" value="Urease_gamma"/>
</dbReference>
<dbReference type="InterPro" id="IPR002026">
    <property type="entry name" value="Urease_gamma/gamma-beta_su"/>
</dbReference>
<dbReference type="InterPro" id="IPR036463">
    <property type="entry name" value="Urease_gamma_sf"/>
</dbReference>
<dbReference type="InterPro" id="IPR050069">
    <property type="entry name" value="Urease_subunit"/>
</dbReference>
<dbReference type="NCBIfam" id="NF009712">
    <property type="entry name" value="PRK13241.1"/>
    <property type="match status" value="1"/>
</dbReference>
<dbReference type="NCBIfam" id="TIGR00193">
    <property type="entry name" value="urease_gam"/>
    <property type="match status" value="1"/>
</dbReference>
<dbReference type="PANTHER" id="PTHR33569">
    <property type="entry name" value="UREASE"/>
    <property type="match status" value="1"/>
</dbReference>
<dbReference type="PANTHER" id="PTHR33569:SF1">
    <property type="entry name" value="UREASE"/>
    <property type="match status" value="1"/>
</dbReference>
<dbReference type="Pfam" id="PF00547">
    <property type="entry name" value="Urease_gamma"/>
    <property type="match status" value="1"/>
</dbReference>
<dbReference type="PIRSF" id="PIRSF001223">
    <property type="entry name" value="Urease_gamma"/>
    <property type="match status" value="1"/>
</dbReference>
<dbReference type="SUPFAM" id="SSF54111">
    <property type="entry name" value="Urease, gamma-subunit"/>
    <property type="match status" value="1"/>
</dbReference>
<evidence type="ECO:0000255" key="1">
    <source>
        <dbReference type="HAMAP-Rule" id="MF_00739"/>
    </source>
</evidence>
<comment type="catalytic activity">
    <reaction evidence="1">
        <text>urea + 2 H2O + H(+) = hydrogencarbonate + 2 NH4(+)</text>
        <dbReference type="Rhea" id="RHEA:20557"/>
        <dbReference type="ChEBI" id="CHEBI:15377"/>
        <dbReference type="ChEBI" id="CHEBI:15378"/>
        <dbReference type="ChEBI" id="CHEBI:16199"/>
        <dbReference type="ChEBI" id="CHEBI:17544"/>
        <dbReference type="ChEBI" id="CHEBI:28938"/>
        <dbReference type="EC" id="3.5.1.5"/>
    </reaction>
</comment>
<comment type="pathway">
    <text evidence="1">Nitrogen metabolism; urea degradation; CO(2) and NH(3) from urea (urease route): step 1/1.</text>
</comment>
<comment type="subunit">
    <text evidence="1">Heterotrimer of UreA (gamma), UreB (beta) and UreC (alpha) subunits. Three heterotrimers associate to form the active enzyme.</text>
</comment>
<comment type="subcellular location">
    <subcellularLocation>
        <location evidence="1">Cytoplasm</location>
    </subcellularLocation>
</comment>
<comment type="similarity">
    <text evidence="1">Belongs to the urease gamma subunit family.</text>
</comment>
<protein>
    <recommendedName>
        <fullName evidence="1">Urease subunit gamma</fullName>
        <ecNumber evidence="1">3.5.1.5</ecNumber>
    </recommendedName>
    <alternativeName>
        <fullName evidence="1">Urea amidohydrolase subunit gamma</fullName>
    </alternativeName>
</protein>